<reference key="1">
    <citation type="journal article" date="2009" name="PLoS Genet.">
        <title>Organised genome dynamics in the Escherichia coli species results in highly diverse adaptive paths.</title>
        <authorList>
            <person name="Touchon M."/>
            <person name="Hoede C."/>
            <person name="Tenaillon O."/>
            <person name="Barbe V."/>
            <person name="Baeriswyl S."/>
            <person name="Bidet P."/>
            <person name="Bingen E."/>
            <person name="Bonacorsi S."/>
            <person name="Bouchier C."/>
            <person name="Bouvet O."/>
            <person name="Calteau A."/>
            <person name="Chiapello H."/>
            <person name="Clermont O."/>
            <person name="Cruveiller S."/>
            <person name="Danchin A."/>
            <person name="Diard M."/>
            <person name="Dossat C."/>
            <person name="Karoui M.E."/>
            <person name="Frapy E."/>
            <person name="Garry L."/>
            <person name="Ghigo J.M."/>
            <person name="Gilles A.M."/>
            <person name="Johnson J."/>
            <person name="Le Bouguenec C."/>
            <person name="Lescat M."/>
            <person name="Mangenot S."/>
            <person name="Martinez-Jehanne V."/>
            <person name="Matic I."/>
            <person name="Nassif X."/>
            <person name="Oztas S."/>
            <person name="Petit M.A."/>
            <person name="Pichon C."/>
            <person name="Rouy Z."/>
            <person name="Ruf C.S."/>
            <person name="Schneider D."/>
            <person name="Tourret J."/>
            <person name="Vacherie B."/>
            <person name="Vallenet D."/>
            <person name="Medigue C."/>
            <person name="Rocha E.P.C."/>
            <person name="Denamur E."/>
        </authorList>
    </citation>
    <scope>NUCLEOTIDE SEQUENCE [LARGE SCALE GENOMIC DNA]</scope>
    <source>
        <strain>55989 / EAEC</strain>
    </source>
</reference>
<gene>
    <name evidence="1" type="primary">mgsA</name>
    <name type="ordered locus">EC55989_1012</name>
</gene>
<evidence type="ECO:0000255" key="1">
    <source>
        <dbReference type="HAMAP-Rule" id="MF_00549"/>
    </source>
</evidence>
<sequence>MELTTRTLPARKHIALVAHDHCKQMLMSWVERHQPLLEQHVLYATGTTGNLISRATGMNINAMLSGPMGGDQQVGALISEGKIDVLIFFWDPLNAVPHDPDVKALLRLATVWNIPVATNVATADFIIQSPHFNDAVDILIPDYQRYLADRLK</sequence>
<feature type="chain" id="PRO_1000146625" description="Methylglyoxal synthase">
    <location>
        <begin position="1"/>
        <end position="152"/>
    </location>
</feature>
<feature type="domain" description="MGS-like" evidence="1">
    <location>
        <begin position="6"/>
        <end position="152"/>
    </location>
</feature>
<feature type="active site" description="Proton donor/acceptor" evidence="1">
    <location>
        <position position="71"/>
    </location>
</feature>
<feature type="binding site" evidence="1">
    <location>
        <position position="19"/>
    </location>
    <ligand>
        <name>substrate</name>
    </ligand>
</feature>
<feature type="binding site" evidence="1">
    <location>
        <position position="23"/>
    </location>
    <ligand>
        <name>substrate</name>
    </ligand>
</feature>
<feature type="binding site" evidence="1">
    <location>
        <begin position="45"/>
        <end position="48"/>
    </location>
    <ligand>
        <name>substrate</name>
    </ligand>
</feature>
<feature type="binding site" evidence="1">
    <location>
        <begin position="65"/>
        <end position="66"/>
    </location>
    <ligand>
        <name>substrate</name>
    </ligand>
</feature>
<feature type="binding site" evidence="1">
    <location>
        <position position="98"/>
    </location>
    <ligand>
        <name>substrate</name>
    </ligand>
</feature>
<proteinExistence type="inferred from homology"/>
<name>MGSA_ECO55</name>
<dbReference type="EC" id="4.2.3.3" evidence="1"/>
<dbReference type="EMBL" id="CU928145">
    <property type="protein sequence ID" value="CAU96874.1"/>
    <property type="molecule type" value="Genomic_DNA"/>
</dbReference>
<dbReference type="RefSeq" id="WP_001386685.1">
    <property type="nucleotide sequence ID" value="NC_011748.1"/>
</dbReference>
<dbReference type="SMR" id="B7LE63"/>
<dbReference type="KEGG" id="eck:EC55989_1012"/>
<dbReference type="HOGENOM" id="CLU_120420_0_1_6"/>
<dbReference type="Proteomes" id="UP000000746">
    <property type="component" value="Chromosome"/>
</dbReference>
<dbReference type="GO" id="GO:0005829">
    <property type="term" value="C:cytosol"/>
    <property type="evidence" value="ECO:0007669"/>
    <property type="project" value="TreeGrafter"/>
</dbReference>
<dbReference type="GO" id="GO:0008929">
    <property type="term" value="F:methylglyoxal synthase activity"/>
    <property type="evidence" value="ECO:0007669"/>
    <property type="project" value="UniProtKB-UniRule"/>
</dbReference>
<dbReference type="GO" id="GO:0019242">
    <property type="term" value="P:methylglyoxal biosynthetic process"/>
    <property type="evidence" value="ECO:0007669"/>
    <property type="project" value="UniProtKB-UniRule"/>
</dbReference>
<dbReference type="CDD" id="cd01422">
    <property type="entry name" value="MGS"/>
    <property type="match status" value="1"/>
</dbReference>
<dbReference type="FunFam" id="3.40.50.1380:FF:000002">
    <property type="entry name" value="Methylglyoxal synthase"/>
    <property type="match status" value="1"/>
</dbReference>
<dbReference type="Gene3D" id="3.40.50.1380">
    <property type="entry name" value="Methylglyoxal synthase-like domain"/>
    <property type="match status" value="1"/>
</dbReference>
<dbReference type="HAMAP" id="MF_00549">
    <property type="entry name" value="Methylglyoxal_synth"/>
    <property type="match status" value="1"/>
</dbReference>
<dbReference type="InterPro" id="IPR004363">
    <property type="entry name" value="Methylgl_synth"/>
</dbReference>
<dbReference type="InterPro" id="IPR018148">
    <property type="entry name" value="Methylglyoxal_synth_AS"/>
</dbReference>
<dbReference type="InterPro" id="IPR011607">
    <property type="entry name" value="MGS-like_dom"/>
</dbReference>
<dbReference type="InterPro" id="IPR036914">
    <property type="entry name" value="MGS-like_dom_sf"/>
</dbReference>
<dbReference type="NCBIfam" id="TIGR00160">
    <property type="entry name" value="MGSA"/>
    <property type="match status" value="1"/>
</dbReference>
<dbReference type="NCBIfam" id="NF003559">
    <property type="entry name" value="PRK05234.1"/>
    <property type="match status" value="1"/>
</dbReference>
<dbReference type="PANTHER" id="PTHR30492">
    <property type="entry name" value="METHYLGLYOXAL SYNTHASE"/>
    <property type="match status" value="1"/>
</dbReference>
<dbReference type="PANTHER" id="PTHR30492:SF0">
    <property type="entry name" value="METHYLGLYOXAL SYNTHASE"/>
    <property type="match status" value="1"/>
</dbReference>
<dbReference type="Pfam" id="PF02142">
    <property type="entry name" value="MGS"/>
    <property type="match status" value="1"/>
</dbReference>
<dbReference type="PIRSF" id="PIRSF006614">
    <property type="entry name" value="Methylglyox_syn"/>
    <property type="match status" value="1"/>
</dbReference>
<dbReference type="SMART" id="SM00851">
    <property type="entry name" value="MGS"/>
    <property type="match status" value="1"/>
</dbReference>
<dbReference type="SUPFAM" id="SSF52335">
    <property type="entry name" value="Methylglyoxal synthase-like"/>
    <property type="match status" value="1"/>
</dbReference>
<dbReference type="PROSITE" id="PS01335">
    <property type="entry name" value="METHYLGLYOXAL_SYNTH"/>
    <property type="match status" value="1"/>
</dbReference>
<dbReference type="PROSITE" id="PS51855">
    <property type="entry name" value="MGS"/>
    <property type="match status" value="1"/>
</dbReference>
<organism>
    <name type="scientific">Escherichia coli (strain 55989 / EAEC)</name>
    <dbReference type="NCBI Taxonomy" id="585055"/>
    <lineage>
        <taxon>Bacteria</taxon>
        <taxon>Pseudomonadati</taxon>
        <taxon>Pseudomonadota</taxon>
        <taxon>Gammaproteobacteria</taxon>
        <taxon>Enterobacterales</taxon>
        <taxon>Enterobacteriaceae</taxon>
        <taxon>Escherichia</taxon>
    </lineage>
</organism>
<keyword id="KW-0456">Lyase</keyword>
<keyword id="KW-1185">Reference proteome</keyword>
<accession>B7LE63</accession>
<comment type="function">
    <text evidence="1">Catalyzes the formation of methylglyoxal from dihydroxyacetone phosphate.</text>
</comment>
<comment type="catalytic activity">
    <reaction evidence="1">
        <text>dihydroxyacetone phosphate = methylglyoxal + phosphate</text>
        <dbReference type="Rhea" id="RHEA:17937"/>
        <dbReference type="ChEBI" id="CHEBI:17158"/>
        <dbReference type="ChEBI" id="CHEBI:43474"/>
        <dbReference type="ChEBI" id="CHEBI:57642"/>
        <dbReference type="EC" id="4.2.3.3"/>
    </reaction>
</comment>
<comment type="similarity">
    <text evidence="1">Belongs to the methylglyoxal synthase family.</text>
</comment>
<protein>
    <recommendedName>
        <fullName evidence="1">Methylglyoxal synthase</fullName>
        <shortName evidence="1">MGS</shortName>
        <ecNumber evidence="1">4.2.3.3</ecNumber>
    </recommendedName>
</protein>